<name>RS28_HALLT</name>
<evidence type="ECO:0000255" key="1">
    <source>
        <dbReference type="HAMAP-Rule" id="MF_00292"/>
    </source>
</evidence>
<evidence type="ECO:0000305" key="2"/>
<accession>B9LPY3</accession>
<feature type="chain" id="PRO_1000194309" description="Small ribosomal subunit protein eS28">
    <location>
        <begin position="1"/>
        <end position="74"/>
    </location>
</feature>
<comment type="similarity">
    <text evidence="1">Belongs to the eukaryotic ribosomal protein eS28 family.</text>
</comment>
<organism>
    <name type="scientific">Halorubrum lacusprofundi (strain ATCC 49239 / DSM 5036 / JCM 8891 / ACAM 34)</name>
    <dbReference type="NCBI Taxonomy" id="416348"/>
    <lineage>
        <taxon>Archaea</taxon>
        <taxon>Methanobacteriati</taxon>
        <taxon>Methanobacteriota</taxon>
        <taxon>Stenosarchaea group</taxon>
        <taxon>Halobacteria</taxon>
        <taxon>Halobacteriales</taxon>
        <taxon>Haloferacaceae</taxon>
        <taxon>Halorubrum</taxon>
    </lineage>
</organism>
<protein>
    <recommendedName>
        <fullName evidence="1">Small ribosomal subunit protein eS28</fullName>
    </recommendedName>
    <alternativeName>
        <fullName evidence="2">30S ribosomal protein S28e</fullName>
    </alternativeName>
</protein>
<proteinExistence type="inferred from homology"/>
<sequence>MSAEEGTGDSTTAEVIEVVGKTGMHGEAMQVKCRIQEGSNQGRIITRNVLGPVRMGDVLQLRETQRDADSIGGR</sequence>
<gene>
    <name evidence="1" type="primary">rps28e</name>
    <name type="ordered locus">Hlac_1843</name>
</gene>
<dbReference type="EMBL" id="CP001365">
    <property type="protein sequence ID" value="ACM57421.1"/>
    <property type="molecule type" value="Genomic_DNA"/>
</dbReference>
<dbReference type="RefSeq" id="WP_004046478.1">
    <property type="nucleotide sequence ID" value="NC_012029.1"/>
</dbReference>
<dbReference type="SMR" id="B9LPY3"/>
<dbReference type="GeneID" id="7400035"/>
<dbReference type="KEGG" id="hla:Hlac_1843"/>
<dbReference type="eggNOG" id="arCOG04314">
    <property type="taxonomic scope" value="Archaea"/>
</dbReference>
<dbReference type="HOGENOM" id="CLU_178987_2_1_2"/>
<dbReference type="Proteomes" id="UP000000740">
    <property type="component" value="Chromosome 1"/>
</dbReference>
<dbReference type="GO" id="GO:0022627">
    <property type="term" value="C:cytosolic small ribosomal subunit"/>
    <property type="evidence" value="ECO:0007669"/>
    <property type="project" value="TreeGrafter"/>
</dbReference>
<dbReference type="GO" id="GO:0003735">
    <property type="term" value="F:structural constituent of ribosome"/>
    <property type="evidence" value="ECO:0007669"/>
    <property type="project" value="InterPro"/>
</dbReference>
<dbReference type="GO" id="GO:0030490">
    <property type="term" value="P:maturation of SSU-rRNA"/>
    <property type="evidence" value="ECO:0007669"/>
    <property type="project" value="TreeGrafter"/>
</dbReference>
<dbReference type="GO" id="GO:0000028">
    <property type="term" value="P:ribosomal small subunit assembly"/>
    <property type="evidence" value="ECO:0007669"/>
    <property type="project" value="TreeGrafter"/>
</dbReference>
<dbReference type="GO" id="GO:0006412">
    <property type="term" value="P:translation"/>
    <property type="evidence" value="ECO:0007669"/>
    <property type="project" value="UniProtKB-UniRule"/>
</dbReference>
<dbReference type="CDD" id="cd04457">
    <property type="entry name" value="S1_S28E"/>
    <property type="match status" value="1"/>
</dbReference>
<dbReference type="FunFam" id="2.40.50.140:FF:000145">
    <property type="entry name" value="30S ribosomal protein S28e"/>
    <property type="match status" value="1"/>
</dbReference>
<dbReference type="Gene3D" id="2.40.50.140">
    <property type="entry name" value="Nucleic acid-binding proteins"/>
    <property type="match status" value="1"/>
</dbReference>
<dbReference type="HAMAP" id="MF_00292">
    <property type="entry name" value="Ribosomal_eS28"/>
    <property type="match status" value="1"/>
</dbReference>
<dbReference type="InterPro" id="IPR012340">
    <property type="entry name" value="NA-bd_OB-fold"/>
</dbReference>
<dbReference type="InterPro" id="IPR000289">
    <property type="entry name" value="Ribosomal_eS28"/>
</dbReference>
<dbReference type="NCBIfam" id="NF003080">
    <property type="entry name" value="PRK04007.1"/>
    <property type="match status" value="1"/>
</dbReference>
<dbReference type="PANTHER" id="PTHR10769">
    <property type="entry name" value="40S RIBOSOMAL PROTEIN S28"/>
    <property type="match status" value="1"/>
</dbReference>
<dbReference type="PANTHER" id="PTHR10769:SF3">
    <property type="entry name" value="SMALL RIBOSOMAL SUBUNIT PROTEIN ES28"/>
    <property type="match status" value="1"/>
</dbReference>
<dbReference type="Pfam" id="PF01200">
    <property type="entry name" value="Ribosomal_S28e"/>
    <property type="match status" value="1"/>
</dbReference>
<dbReference type="SUPFAM" id="SSF50249">
    <property type="entry name" value="Nucleic acid-binding proteins"/>
    <property type="match status" value="1"/>
</dbReference>
<keyword id="KW-1185">Reference proteome</keyword>
<keyword id="KW-0687">Ribonucleoprotein</keyword>
<keyword id="KW-0689">Ribosomal protein</keyword>
<reference key="1">
    <citation type="journal article" date="2016" name="Stand. Genomic Sci.">
        <title>Complete genome sequence of the Antarctic Halorubrum lacusprofundi type strain ACAM 34.</title>
        <authorList>
            <person name="Anderson I.J."/>
            <person name="DasSarma P."/>
            <person name="Lucas S."/>
            <person name="Copeland A."/>
            <person name="Lapidus A."/>
            <person name="Del Rio T.G."/>
            <person name="Tice H."/>
            <person name="Dalin E."/>
            <person name="Bruce D.C."/>
            <person name="Goodwin L."/>
            <person name="Pitluck S."/>
            <person name="Sims D."/>
            <person name="Brettin T.S."/>
            <person name="Detter J.C."/>
            <person name="Han C.S."/>
            <person name="Larimer F."/>
            <person name="Hauser L."/>
            <person name="Land M."/>
            <person name="Ivanova N."/>
            <person name="Richardson P."/>
            <person name="Cavicchioli R."/>
            <person name="DasSarma S."/>
            <person name="Woese C.R."/>
            <person name="Kyrpides N.C."/>
        </authorList>
    </citation>
    <scope>NUCLEOTIDE SEQUENCE [LARGE SCALE GENOMIC DNA]</scope>
    <source>
        <strain>ATCC 49239 / DSM 5036 / JCM 8891 / ACAM 34</strain>
    </source>
</reference>